<evidence type="ECO:0000250" key="1"/>
<evidence type="ECO:0000250" key="2">
    <source>
        <dbReference type="UniProtKB" id="Q9LV09"/>
    </source>
</evidence>
<evidence type="ECO:0000255" key="3"/>
<evidence type="ECO:0000255" key="4">
    <source>
        <dbReference type="PROSITE-ProRule" id="PRU00547"/>
    </source>
</evidence>
<evidence type="ECO:0000256" key="5">
    <source>
        <dbReference type="SAM" id="MobiDB-lite"/>
    </source>
</evidence>
<evidence type="ECO:0000269" key="6">
    <source>
    </source>
</evidence>
<comment type="function">
    <text evidence="1">Small heat shock protein required for the establishment of auxin gradients and for patterning of the apical domain of the embryo. Involved in the specification of the cotyledon primordia. Also required for normal inflorescence and floral meristem function, normal developmental patterning and thermotolerance. Acts as a molecular chaperone (By similarity).</text>
</comment>
<comment type="subcellular location">
    <subcellularLocation>
        <location evidence="1">Cytoplasm</location>
    </subcellularLocation>
    <subcellularLocation>
        <location evidence="1">Cytoplasmic granule</location>
    </subcellularLocation>
</comment>
<comment type="induction">
    <text evidence="6">Up-regulated by heat shock.</text>
</comment>
<protein>
    <recommendedName>
        <fullName>Protein BOBBER 2</fullName>
    </recommendedName>
</protein>
<gene>
    <name type="primary">BOB2</name>
    <name type="ordered locus">At4g27890</name>
    <name type="ORF">T27E11.130</name>
</gene>
<keyword id="KW-0007">Acetylation</keyword>
<keyword id="KW-0143">Chaperone</keyword>
<keyword id="KW-0175">Coiled coil</keyword>
<keyword id="KW-0963">Cytoplasm</keyword>
<keyword id="KW-0217">Developmental protein</keyword>
<keyword id="KW-1185">Reference proteome</keyword>
<feature type="initiator methionine" description="Removed" evidence="2">
    <location>
        <position position="1"/>
    </location>
</feature>
<feature type="chain" id="PRO_0000420924" description="Protein BOBBER 2">
    <location>
        <begin position="2"/>
        <end position="293"/>
    </location>
</feature>
<feature type="domain" description="CS" evidence="4">
    <location>
        <begin position="131"/>
        <end position="220"/>
    </location>
</feature>
<feature type="region of interest" description="Disordered" evidence="5">
    <location>
        <begin position="67"/>
        <end position="125"/>
    </location>
</feature>
<feature type="coiled-coil region" evidence="3">
    <location>
        <begin position="50"/>
        <end position="80"/>
    </location>
</feature>
<feature type="compositionally biased region" description="Basic and acidic residues" evidence="5">
    <location>
        <begin position="67"/>
        <end position="102"/>
    </location>
</feature>
<feature type="compositionally biased region" description="Basic and acidic residues" evidence="5">
    <location>
        <begin position="110"/>
        <end position="120"/>
    </location>
</feature>
<feature type="modified residue" description="N-acetylalanine" evidence="2">
    <location>
        <position position="2"/>
    </location>
</feature>
<sequence>MAIISEMEEARPSMVPFTASFDPSNPIAFLEKVLDVIGKESNFLKKDTAEKEIVAAVMAAKQRLREAEKKKLEKESVKSMEVEKPKKDSLKPTELEKPKEESLMATDPMEIEKPKEEKESGPIVPNKGNGLDFEKYSWGQNLQEVTINIPMPEGTKSRSVTCEIKKNRLKVGLKGQDLIVDGEFFNSVKPDDCFWNIEDQKMISVLLTKQDQMEWWKYCVKGEPEIDTQKVEPETSKLGDLDPETRASVEKMMFDQRQKQMGLPRSDEIEKKDMLKKFMAQNPGMDFSNAKFN</sequence>
<organism>
    <name type="scientific">Arabidopsis thaliana</name>
    <name type="common">Mouse-ear cress</name>
    <dbReference type="NCBI Taxonomy" id="3702"/>
    <lineage>
        <taxon>Eukaryota</taxon>
        <taxon>Viridiplantae</taxon>
        <taxon>Streptophyta</taxon>
        <taxon>Embryophyta</taxon>
        <taxon>Tracheophyta</taxon>
        <taxon>Spermatophyta</taxon>
        <taxon>Magnoliopsida</taxon>
        <taxon>eudicotyledons</taxon>
        <taxon>Gunneridae</taxon>
        <taxon>Pentapetalae</taxon>
        <taxon>rosids</taxon>
        <taxon>malvids</taxon>
        <taxon>Brassicales</taxon>
        <taxon>Brassicaceae</taxon>
        <taxon>Camelineae</taxon>
        <taxon>Arabidopsis</taxon>
    </lineage>
</organism>
<name>BOB2_ARATH</name>
<accession>Q9STN7</accession>
<dbReference type="EMBL" id="AL078579">
    <property type="protein sequence ID" value="CAB43977.1"/>
    <property type="molecule type" value="Genomic_DNA"/>
</dbReference>
<dbReference type="EMBL" id="AL161571">
    <property type="protein sequence ID" value="CAB81438.1"/>
    <property type="molecule type" value="Genomic_DNA"/>
</dbReference>
<dbReference type="EMBL" id="CP002687">
    <property type="protein sequence ID" value="AEE85405.1"/>
    <property type="molecule type" value="Genomic_DNA"/>
</dbReference>
<dbReference type="EMBL" id="AY142524">
    <property type="protein sequence ID" value="AAN13067.1"/>
    <property type="molecule type" value="mRNA"/>
</dbReference>
<dbReference type="PIR" id="T09028">
    <property type="entry name" value="T09028"/>
</dbReference>
<dbReference type="RefSeq" id="NP_194518.1">
    <property type="nucleotide sequence ID" value="NM_118927.5"/>
</dbReference>
<dbReference type="SMR" id="Q9STN7"/>
<dbReference type="FunCoup" id="Q9STN7">
    <property type="interactions" value="3628"/>
</dbReference>
<dbReference type="STRING" id="3702.Q9STN7"/>
<dbReference type="PaxDb" id="3702-AT4G27890.1"/>
<dbReference type="ProteomicsDB" id="240357"/>
<dbReference type="EnsemblPlants" id="AT4G27890.1">
    <property type="protein sequence ID" value="AT4G27890.1"/>
    <property type="gene ID" value="AT4G27890"/>
</dbReference>
<dbReference type="GeneID" id="828902"/>
<dbReference type="Gramene" id="AT4G27890.1">
    <property type="protein sequence ID" value="AT4G27890.1"/>
    <property type="gene ID" value="AT4G27890"/>
</dbReference>
<dbReference type="KEGG" id="ath:AT4G27890"/>
<dbReference type="Araport" id="AT4G27890"/>
<dbReference type="TAIR" id="AT4G27890"/>
<dbReference type="eggNOG" id="KOG2265">
    <property type="taxonomic scope" value="Eukaryota"/>
</dbReference>
<dbReference type="HOGENOM" id="CLU_047332_1_1_1"/>
<dbReference type="InParanoid" id="Q9STN7"/>
<dbReference type="OMA" id="NQMEWWS"/>
<dbReference type="OrthoDB" id="416217at2759"/>
<dbReference type="PhylomeDB" id="Q9STN7"/>
<dbReference type="PRO" id="PR:Q9STN7"/>
<dbReference type="Proteomes" id="UP000006548">
    <property type="component" value="Chromosome 4"/>
</dbReference>
<dbReference type="ExpressionAtlas" id="Q9STN7">
    <property type="expression patterns" value="baseline and differential"/>
</dbReference>
<dbReference type="GO" id="GO:0005737">
    <property type="term" value="C:cytoplasm"/>
    <property type="evidence" value="ECO:0007669"/>
    <property type="project" value="UniProtKB-SubCell"/>
</dbReference>
<dbReference type="GO" id="GO:0006950">
    <property type="term" value="P:response to stress"/>
    <property type="evidence" value="ECO:0007669"/>
    <property type="project" value="UniProtKB-ARBA"/>
</dbReference>
<dbReference type="CDD" id="cd06467">
    <property type="entry name" value="p23_NUDC_like"/>
    <property type="match status" value="1"/>
</dbReference>
<dbReference type="FunFam" id="2.60.40.790:FF:000001">
    <property type="entry name" value="Nuclear migration protein nudC"/>
    <property type="match status" value="1"/>
</dbReference>
<dbReference type="Gene3D" id="2.60.40.790">
    <property type="match status" value="1"/>
</dbReference>
<dbReference type="InterPro" id="IPR007052">
    <property type="entry name" value="CS_dom"/>
</dbReference>
<dbReference type="InterPro" id="IPR008978">
    <property type="entry name" value="HSP20-like_chaperone"/>
</dbReference>
<dbReference type="InterPro" id="IPR037898">
    <property type="entry name" value="NudC_fam"/>
</dbReference>
<dbReference type="PANTHER" id="PTHR12356">
    <property type="entry name" value="NUCLEAR MOVEMENT PROTEIN NUDC"/>
    <property type="match status" value="1"/>
</dbReference>
<dbReference type="PANTHER" id="PTHR12356:SF32">
    <property type="entry name" value="PROTEIN BOBBER 2"/>
    <property type="match status" value="1"/>
</dbReference>
<dbReference type="Pfam" id="PF04969">
    <property type="entry name" value="CS"/>
    <property type="match status" value="1"/>
</dbReference>
<dbReference type="SUPFAM" id="SSF49764">
    <property type="entry name" value="HSP20-like chaperones"/>
    <property type="match status" value="1"/>
</dbReference>
<dbReference type="PROSITE" id="PS51203">
    <property type="entry name" value="CS"/>
    <property type="match status" value="1"/>
</dbReference>
<reference key="1">
    <citation type="journal article" date="1999" name="Nature">
        <title>Sequence and analysis of chromosome 4 of the plant Arabidopsis thaliana.</title>
        <authorList>
            <person name="Mayer K.F.X."/>
            <person name="Schueller C."/>
            <person name="Wambutt R."/>
            <person name="Murphy G."/>
            <person name="Volckaert G."/>
            <person name="Pohl T."/>
            <person name="Duesterhoeft A."/>
            <person name="Stiekema W."/>
            <person name="Entian K.-D."/>
            <person name="Terryn N."/>
            <person name="Harris B."/>
            <person name="Ansorge W."/>
            <person name="Brandt P."/>
            <person name="Grivell L.A."/>
            <person name="Rieger M."/>
            <person name="Weichselgartner M."/>
            <person name="de Simone V."/>
            <person name="Obermaier B."/>
            <person name="Mache R."/>
            <person name="Mueller M."/>
            <person name="Kreis M."/>
            <person name="Delseny M."/>
            <person name="Puigdomenech P."/>
            <person name="Watson M."/>
            <person name="Schmidtheini T."/>
            <person name="Reichert B."/>
            <person name="Portetelle D."/>
            <person name="Perez-Alonso M."/>
            <person name="Boutry M."/>
            <person name="Bancroft I."/>
            <person name="Vos P."/>
            <person name="Hoheisel J."/>
            <person name="Zimmermann W."/>
            <person name="Wedler H."/>
            <person name="Ridley P."/>
            <person name="Langham S.-A."/>
            <person name="McCullagh B."/>
            <person name="Bilham L."/>
            <person name="Robben J."/>
            <person name="van der Schueren J."/>
            <person name="Grymonprez B."/>
            <person name="Chuang Y.-J."/>
            <person name="Vandenbussche F."/>
            <person name="Braeken M."/>
            <person name="Weltjens I."/>
            <person name="Voet M."/>
            <person name="Bastiaens I."/>
            <person name="Aert R."/>
            <person name="Defoor E."/>
            <person name="Weitzenegger T."/>
            <person name="Bothe G."/>
            <person name="Ramsperger U."/>
            <person name="Hilbert H."/>
            <person name="Braun M."/>
            <person name="Holzer E."/>
            <person name="Brandt A."/>
            <person name="Peters S."/>
            <person name="van Staveren M."/>
            <person name="Dirkse W."/>
            <person name="Mooijman P."/>
            <person name="Klein Lankhorst R."/>
            <person name="Rose M."/>
            <person name="Hauf J."/>
            <person name="Koetter P."/>
            <person name="Berneiser S."/>
            <person name="Hempel S."/>
            <person name="Feldpausch M."/>
            <person name="Lamberth S."/>
            <person name="Van den Daele H."/>
            <person name="De Keyser A."/>
            <person name="Buysshaert C."/>
            <person name="Gielen J."/>
            <person name="Villarroel R."/>
            <person name="De Clercq R."/>
            <person name="van Montagu M."/>
            <person name="Rogers J."/>
            <person name="Cronin A."/>
            <person name="Quail M.A."/>
            <person name="Bray-Allen S."/>
            <person name="Clark L."/>
            <person name="Doggett J."/>
            <person name="Hall S."/>
            <person name="Kay M."/>
            <person name="Lennard N."/>
            <person name="McLay K."/>
            <person name="Mayes R."/>
            <person name="Pettett A."/>
            <person name="Rajandream M.A."/>
            <person name="Lyne M."/>
            <person name="Benes V."/>
            <person name="Rechmann S."/>
            <person name="Borkova D."/>
            <person name="Bloecker H."/>
            <person name="Scharfe M."/>
            <person name="Grimm M."/>
            <person name="Loehnert T.-H."/>
            <person name="Dose S."/>
            <person name="de Haan M."/>
            <person name="Maarse A.C."/>
            <person name="Schaefer M."/>
            <person name="Mueller-Auer S."/>
            <person name="Gabel C."/>
            <person name="Fuchs M."/>
            <person name="Fartmann B."/>
            <person name="Granderath K."/>
            <person name="Dauner D."/>
            <person name="Herzl A."/>
            <person name="Neumann S."/>
            <person name="Argiriou A."/>
            <person name="Vitale D."/>
            <person name="Liguori R."/>
            <person name="Piravandi E."/>
            <person name="Massenet O."/>
            <person name="Quigley F."/>
            <person name="Clabauld G."/>
            <person name="Muendlein A."/>
            <person name="Felber R."/>
            <person name="Schnabl S."/>
            <person name="Hiller R."/>
            <person name="Schmidt W."/>
            <person name="Lecharny A."/>
            <person name="Aubourg S."/>
            <person name="Chefdor F."/>
            <person name="Cooke R."/>
            <person name="Berger C."/>
            <person name="Monfort A."/>
            <person name="Casacuberta E."/>
            <person name="Gibbons T."/>
            <person name="Weber N."/>
            <person name="Vandenbol M."/>
            <person name="Bargues M."/>
            <person name="Terol J."/>
            <person name="Torres A."/>
            <person name="Perez-Perez A."/>
            <person name="Purnelle B."/>
            <person name="Bent E."/>
            <person name="Johnson S."/>
            <person name="Tacon D."/>
            <person name="Jesse T."/>
            <person name="Heijnen L."/>
            <person name="Schwarz S."/>
            <person name="Scholler P."/>
            <person name="Heber S."/>
            <person name="Francs P."/>
            <person name="Bielke C."/>
            <person name="Frishman D."/>
            <person name="Haase D."/>
            <person name="Lemcke K."/>
            <person name="Mewes H.-W."/>
            <person name="Stocker S."/>
            <person name="Zaccaria P."/>
            <person name="Bevan M."/>
            <person name="Wilson R.K."/>
            <person name="de la Bastide M."/>
            <person name="Habermann K."/>
            <person name="Parnell L."/>
            <person name="Dedhia N."/>
            <person name="Gnoj L."/>
            <person name="Schutz K."/>
            <person name="Huang E."/>
            <person name="Spiegel L."/>
            <person name="Sekhon M."/>
            <person name="Murray J."/>
            <person name="Sheet P."/>
            <person name="Cordes M."/>
            <person name="Abu-Threideh J."/>
            <person name="Stoneking T."/>
            <person name="Kalicki J."/>
            <person name="Graves T."/>
            <person name="Harmon G."/>
            <person name="Edwards J."/>
            <person name="Latreille P."/>
            <person name="Courtney L."/>
            <person name="Cloud J."/>
            <person name="Abbott A."/>
            <person name="Scott K."/>
            <person name="Johnson D."/>
            <person name="Minx P."/>
            <person name="Bentley D."/>
            <person name="Fulton B."/>
            <person name="Miller N."/>
            <person name="Greco T."/>
            <person name="Kemp K."/>
            <person name="Kramer J."/>
            <person name="Fulton L."/>
            <person name="Mardis E."/>
            <person name="Dante M."/>
            <person name="Pepin K."/>
            <person name="Hillier L.W."/>
            <person name="Nelson J."/>
            <person name="Spieth J."/>
            <person name="Ryan E."/>
            <person name="Andrews S."/>
            <person name="Geisel C."/>
            <person name="Layman D."/>
            <person name="Du H."/>
            <person name="Ali J."/>
            <person name="Berghoff A."/>
            <person name="Jones K."/>
            <person name="Drone K."/>
            <person name="Cotton M."/>
            <person name="Joshu C."/>
            <person name="Antonoiu B."/>
            <person name="Zidanic M."/>
            <person name="Strong C."/>
            <person name="Sun H."/>
            <person name="Lamar B."/>
            <person name="Yordan C."/>
            <person name="Ma P."/>
            <person name="Zhong J."/>
            <person name="Preston R."/>
            <person name="Vil D."/>
            <person name="Shekher M."/>
            <person name="Matero A."/>
            <person name="Shah R."/>
            <person name="Swaby I.K."/>
            <person name="O'Shaughnessy A."/>
            <person name="Rodriguez M."/>
            <person name="Hoffman J."/>
            <person name="Till S."/>
            <person name="Granat S."/>
            <person name="Shohdy N."/>
            <person name="Hasegawa A."/>
            <person name="Hameed A."/>
            <person name="Lodhi M."/>
            <person name="Johnson A."/>
            <person name="Chen E."/>
            <person name="Marra M.A."/>
            <person name="Martienssen R."/>
            <person name="McCombie W.R."/>
        </authorList>
    </citation>
    <scope>NUCLEOTIDE SEQUENCE [LARGE SCALE GENOMIC DNA]</scope>
    <source>
        <strain>cv. Columbia</strain>
    </source>
</reference>
<reference key="2">
    <citation type="journal article" date="2017" name="Plant J.">
        <title>Araport11: a complete reannotation of the Arabidopsis thaliana reference genome.</title>
        <authorList>
            <person name="Cheng C.Y."/>
            <person name="Krishnakumar V."/>
            <person name="Chan A.P."/>
            <person name="Thibaud-Nissen F."/>
            <person name="Schobel S."/>
            <person name="Town C.D."/>
        </authorList>
    </citation>
    <scope>GENOME REANNOTATION</scope>
    <source>
        <strain>cv. Columbia</strain>
    </source>
</reference>
<reference key="3">
    <citation type="journal article" date="2003" name="Science">
        <title>Empirical analysis of transcriptional activity in the Arabidopsis genome.</title>
        <authorList>
            <person name="Yamada K."/>
            <person name="Lim J."/>
            <person name="Dale J.M."/>
            <person name="Chen H."/>
            <person name="Shinn P."/>
            <person name="Palm C.J."/>
            <person name="Southwick A.M."/>
            <person name="Wu H.C."/>
            <person name="Kim C.J."/>
            <person name="Nguyen M."/>
            <person name="Pham P.K."/>
            <person name="Cheuk R.F."/>
            <person name="Karlin-Newmann G."/>
            <person name="Liu S.X."/>
            <person name="Lam B."/>
            <person name="Sakano H."/>
            <person name="Wu T."/>
            <person name="Yu G."/>
            <person name="Miranda M."/>
            <person name="Quach H.L."/>
            <person name="Tripp M."/>
            <person name="Chang C.H."/>
            <person name="Lee J.M."/>
            <person name="Toriumi M.J."/>
            <person name="Chan M.M."/>
            <person name="Tang C.C."/>
            <person name="Onodera C.S."/>
            <person name="Deng J.M."/>
            <person name="Akiyama K."/>
            <person name="Ansari Y."/>
            <person name="Arakawa T."/>
            <person name="Banh J."/>
            <person name="Banno F."/>
            <person name="Bowser L."/>
            <person name="Brooks S.Y."/>
            <person name="Carninci P."/>
            <person name="Chao Q."/>
            <person name="Choy N."/>
            <person name="Enju A."/>
            <person name="Goldsmith A.D."/>
            <person name="Gurjal M."/>
            <person name="Hansen N.F."/>
            <person name="Hayashizaki Y."/>
            <person name="Johnson-Hopson C."/>
            <person name="Hsuan V.W."/>
            <person name="Iida K."/>
            <person name="Karnes M."/>
            <person name="Khan S."/>
            <person name="Koesema E."/>
            <person name="Ishida J."/>
            <person name="Jiang P.X."/>
            <person name="Jones T."/>
            <person name="Kawai J."/>
            <person name="Kamiya A."/>
            <person name="Meyers C."/>
            <person name="Nakajima M."/>
            <person name="Narusaka M."/>
            <person name="Seki M."/>
            <person name="Sakurai T."/>
            <person name="Satou M."/>
            <person name="Tamse R."/>
            <person name="Vaysberg M."/>
            <person name="Wallender E.K."/>
            <person name="Wong C."/>
            <person name="Yamamura Y."/>
            <person name="Yuan S."/>
            <person name="Shinozaki K."/>
            <person name="Davis R.W."/>
            <person name="Theologis A."/>
            <person name="Ecker J.R."/>
        </authorList>
    </citation>
    <scope>NUCLEOTIDE SEQUENCE [LARGE SCALE MRNA]</scope>
    <source>
        <strain>cv. Columbia</strain>
    </source>
</reference>
<reference key="4">
    <citation type="journal article" date="2009" name="Plant Cell">
        <title>Partitioning the apical domain of the Arabidopsis embryo requires the BOBBER1 NudC domain protein.</title>
        <authorList>
            <person name="Jurkuta R.J."/>
            <person name="Kaplinsky N.J."/>
            <person name="Spindel J.E."/>
            <person name="Barton M.K."/>
        </authorList>
    </citation>
    <scope>IDENTIFICATION</scope>
    <source>
        <strain>cv. Landsberg erecta</strain>
    </source>
</reference>
<reference key="5">
    <citation type="journal article" date="2009" name="Plant Physiol.">
        <title>BOBBER1 is a noncanonical Arabidopsis small heat shock protein required for both development and thermotolerance.</title>
        <authorList>
            <person name="Perez D.E."/>
            <person name="Hoyer J.S."/>
            <person name="Johnson A.I."/>
            <person name="Moody Z.R."/>
            <person name="Lopez J."/>
            <person name="Kaplinsky N.J."/>
        </authorList>
    </citation>
    <scope>INDUCTION BY HIGH TEMPERATURE</scope>
    <source>
        <strain>cv. Columbia</strain>
    </source>
</reference>
<proteinExistence type="evidence at transcript level"/>